<reference key="1">
    <citation type="journal article" date="2010" name="Genome Biol. Evol.">
        <title>Continuing evolution of Burkholderia mallei through genome reduction and large-scale rearrangements.</title>
        <authorList>
            <person name="Losada L."/>
            <person name="Ronning C.M."/>
            <person name="DeShazer D."/>
            <person name="Woods D."/>
            <person name="Fedorova N."/>
            <person name="Kim H.S."/>
            <person name="Shabalina S.A."/>
            <person name="Pearson T.R."/>
            <person name="Brinkac L."/>
            <person name="Tan P."/>
            <person name="Nandi T."/>
            <person name="Crabtree J."/>
            <person name="Badger J."/>
            <person name="Beckstrom-Sternberg S."/>
            <person name="Saqib M."/>
            <person name="Schutzer S.E."/>
            <person name="Keim P."/>
            <person name="Nierman W.C."/>
        </authorList>
    </citation>
    <scope>NUCLEOTIDE SEQUENCE [LARGE SCALE GENOMIC DNA]</scope>
    <source>
        <strain>1710b</strain>
    </source>
</reference>
<comment type="function">
    <text evidence="1">Part of the Sec protein translocase complex. Interacts with the SecYEG preprotein conducting channel. Has a central role in coupling the hydrolysis of ATP to the transfer of proteins into and across the cell membrane, serving both as a receptor for the preprotein-SecB complex and as an ATP-driven molecular motor driving the stepwise translocation of polypeptide chains across the membrane.</text>
</comment>
<comment type="catalytic activity">
    <reaction evidence="1">
        <text>ATP + H2O + cellular proteinSide 1 = ADP + phosphate + cellular proteinSide 2.</text>
        <dbReference type="EC" id="7.4.2.8"/>
    </reaction>
</comment>
<comment type="cofactor">
    <cofactor evidence="1">
        <name>Zn(2+)</name>
        <dbReference type="ChEBI" id="CHEBI:29105"/>
    </cofactor>
    <text evidence="1">May bind 1 zinc ion per subunit.</text>
</comment>
<comment type="subunit">
    <text evidence="1">Monomer and homodimer. Part of the essential Sec protein translocation apparatus which comprises SecA, SecYEG and auxiliary proteins SecDF-YajC and YidC.</text>
</comment>
<comment type="subcellular location">
    <subcellularLocation>
        <location evidence="1">Cell inner membrane</location>
        <topology evidence="1">Peripheral membrane protein</topology>
        <orientation evidence="1">Cytoplasmic side</orientation>
    </subcellularLocation>
    <subcellularLocation>
        <location evidence="1">Cytoplasm</location>
    </subcellularLocation>
    <text evidence="1">Distribution is 50-50.</text>
</comment>
<comment type="similarity">
    <text evidence="1">Belongs to the SecA family.</text>
</comment>
<organism>
    <name type="scientific">Burkholderia pseudomallei (strain 1710b)</name>
    <dbReference type="NCBI Taxonomy" id="320372"/>
    <lineage>
        <taxon>Bacteria</taxon>
        <taxon>Pseudomonadati</taxon>
        <taxon>Pseudomonadota</taxon>
        <taxon>Betaproteobacteria</taxon>
        <taxon>Burkholderiales</taxon>
        <taxon>Burkholderiaceae</taxon>
        <taxon>Burkholderia</taxon>
        <taxon>pseudomallei group</taxon>
    </lineage>
</organism>
<accession>Q3JNE8</accession>
<gene>
    <name evidence="1" type="primary">secA</name>
    <name type="ordered locus">BURPS1710b_3535</name>
</gene>
<proteinExistence type="inferred from homology"/>
<feature type="chain" id="PRO_0000320755" description="Protein translocase subunit SecA">
    <location>
        <begin position="1"/>
        <end position="931"/>
    </location>
</feature>
<feature type="binding site" evidence="1">
    <location>
        <position position="87"/>
    </location>
    <ligand>
        <name>ATP</name>
        <dbReference type="ChEBI" id="CHEBI:30616"/>
    </ligand>
</feature>
<feature type="binding site" evidence="1">
    <location>
        <begin position="105"/>
        <end position="109"/>
    </location>
    <ligand>
        <name>ATP</name>
        <dbReference type="ChEBI" id="CHEBI:30616"/>
    </ligand>
</feature>
<feature type="binding site" evidence="1">
    <location>
        <position position="515"/>
    </location>
    <ligand>
        <name>ATP</name>
        <dbReference type="ChEBI" id="CHEBI:30616"/>
    </ligand>
</feature>
<feature type="binding site" evidence="1">
    <location>
        <position position="915"/>
    </location>
    <ligand>
        <name>Zn(2+)</name>
        <dbReference type="ChEBI" id="CHEBI:29105"/>
    </ligand>
</feature>
<feature type="binding site" evidence="1">
    <location>
        <position position="917"/>
    </location>
    <ligand>
        <name>Zn(2+)</name>
        <dbReference type="ChEBI" id="CHEBI:29105"/>
    </ligand>
</feature>
<feature type="binding site" evidence="1">
    <location>
        <position position="926"/>
    </location>
    <ligand>
        <name>Zn(2+)</name>
        <dbReference type="ChEBI" id="CHEBI:29105"/>
    </ligand>
</feature>
<feature type="binding site" evidence="1">
    <location>
        <position position="927"/>
    </location>
    <ligand>
        <name>Zn(2+)</name>
        <dbReference type="ChEBI" id="CHEBI:29105"/>
    </ligand>
</feature>
<dbReference type="EC" id="7.4.2.8" evidence="1"/>
<dbReference type="EMBL" id="CP000124">
    <property type="protein sequence ID" value="ABA50229.1"/>
    <property type="molecule type" value="Genomic_DNA"/>
</dbReference>
<dbReference type="RefSeq" id="WP_004194125.1">
    <property type="nucleotide sequence ID" value="NC_007434.1"/>
</dbReference>
<dbReference type="SMR" id="Q3JNE8"/>
<dbReference type="EnsemblBacteria" id="ABA50229">
    <property type="protein sequence ID" value="ABA50229"/>
    <property type="gene ID" value="BURPS1710b_3535"/>
</dbReference>
<dbReference type="GeneID" id="92980233"/>
<dbReference type="KEGG" id="bpm:BURPS1710b_3535"/>
<dbReference type="HOGENOM" id="CLU_005314_3_0_4"/>
<dbReference type="Proteomes" id="UP000002700">
    <property type="component" value="Chromosome I"/>
</dbReference>
<dbReference type="GO" id="GO:0031522">
    <property type="term" value="C:cell envelope Sec protein transport complex"/>
    <property type="evidence" value="ECO:0007669"/>
    <property type="project" value="TreeGrafter"/>
</dbReference>
<dbReference type="GO" id="GO:0005829">
    <property type="term" value="C:cytosol"/>
    <property type="evidence" value="ECO:0007669"/>
    <property type="project" value="TreeGrafter"/>
</dbReference>
<dbReference type="GO" id="GO:0005886">
    <property type="term" value="C:plasma membrane"/>
    <property type="evidence" value="ECO:0007669"/>
    <property type="project" value="UniProtKB-SubCell"/>
</dbReference>
<dbReference type="GO" id="GO:0005524">
    <property type="term" value="F:ATP binding"/>
    <property type="evidence" value="ECO:0007669"/>
    <property type="project" value="UniProtKB-UniRule"/>
</dbReference>
<dbReference type="GO" id="GO:0046872">
    <property type="term" value="F:metal ion binding"/>
    <property type="evidence" value="ECO:0007669"/>
    <property type="project" value="UniProtKB-KW"/>
</dbReference>
<dbReference type="GO" id="GO:0008564">
    <property type="term" value="F:protein-exporting ATPase activity"/>
    <property type="evidence" value="ECO:0007669"/>
    <property type="project" value="UniProtKB-EC"/>
</dbReference>
<dbReference type="GO" id="GO:0065002">
    <property type="term" value="P:intracellular protein transmembrane transport"/>
    <property type="evidence" value="ECO:0007669"/>
    <property type="project" value="UniProtKB-UniRule"/>
</dbReference>
<dbReference type="GO" id="GO:0017038">
    <property type="term" value="P:protein import"/>
    <property type="evidence" value="ECO:0007669"/>
    <property type="project" value="InterPro"/>
</dbReference>
<dbReference type="GO" id="GO:0006605">
    <property type="term" value="P:protein targeting"/>
    <property type="evidence" value="ECO:0007669"/>
    <property type="project" value="UniProtKB-UniRule"/>
</dbReference>
<dbReference type="GO" id="GO:0043952">
    <property type="term" value="P:protein transport by the Sec complex"/>
    <property type="evidence" value="ECO:0007669"/>
    <property type="project" value="TreeGrafter"/>
</dbReference>
<dbReference type="CDD" id="cd17928">
    <property type="entry name" value="DEXDc_SecA"/>
    <property type="match status" value="1"/>
</dbReference>
<dbReference type="CDD" id="cd18803">
    <property type="entry name" value="SF2_C_secA"/>
    <property type="match status" value="1"/>
</dbReference>
<dbReference type="FunFam" id="3.40.50.300:FF:000081">
    <property type="entry name" value="Preprotein translocase subunit SecA"/>
    <property type="match status" value="1"/>
</dbReference>
<dbReference type="FunFam" id="3.40.50.300:FF:000113">
    <property type="entry name" value="Preprotein translocase subunit SecA"/>
    <property type="match status" value="1"/>
</dbReference>
<dbReference type="FunFam" id="3.90.1440.10:FF:000001">
    <property type="entry name" value="Preprotein translocase subunit SecA"/>
    <property type="match status" value="1"/>
</dbReference>
<dbReference type="FunFam" id="1.10.3060.10:FF:000003">
    <property type="entry name" value="Protein translocase subunit SecA"/>
    <property type="match status" value="1"/>
</dbReference>
<dbReference type="Gene3D" id="1.10.3060.10">
    <property type="entry name" value="Helical scaffold and wing domains of SecA"/>
    <property type="match status" value="1"/>
</dbReference>
<dbReference type="Gene3D" id="3.40.50.300">
    <property type="entry name" value="P-loop containing nucleotide triphosphate hydrolases"/>
    <property type="match status" value="2"/>
</dbReference>
<dbReference type="Gene3D" id="3.90.1440.10">
    <property type="entry name" value="SecA, preprotein cross-linking domain"/>
    <property type="match status" value="1"/>
</dbReference>
<dbReference type="HAMAP" id="MF_01382">
    <property type="entry name" value="SecA"/>
    <property type="match status" value="1"/>
</dbReference>
<dbReference type="InterPro" id="IPR014001">
    <property type="entry name" value="Helicase_ATP-bd"/>
</dbReference>
<dbReference type="InterPro" id="IPR001650">
    <property type="entry name" value="Helicase_C-like"/>
</dbReference>
<dbReference type="InterPro" id="IPR027417">
    <property type="entry name" value="P-loop_NTPase"/>
</dbReference>
<dbReference type="InterPro" id="IPR004027">
    <property type="entry name" value="SEC_C_motif"/>
</dbReference>
<dbReference type="InterPro" id="IPR000185">
    <property type="entry name" value="SecA"/>
</dbReference>
<dbReference type="InterPro" id="IPR020937">
    <property type="entry name" value="SecA_CS"/>
</dbReference>
<dbReference type="InterPro" id="IPR011115">
    <property type="entry name" value="SecA_DEAD"/>
</dbReference>
<dbReference type="InterPro" id="IPR014018">
    <property type="entry name" value="SecA_motor_DEAD"/>
</dbReference>
<dbReference type="InterPro" id="IPR011130">
    <property type="entry name" value="SecA_preprotein_X-link_dom"/>
</dbReference>
<dbReference type="InterPro" id="IPR044722">
    <property type="entry name" value="SecA_SF2_C"/>
</dbReference>
<dbReference type="InterPro" id="IPR011116">
    <property type="entry name" value="SecA_Wing/Scaffold"/>
</dbReference>
<dbReference type="InterPro" id="IPR036266">
    <property type="entry name" value="SecA_Wing/Scaffold_sf"/>
</dbReference>
<dbReference type="InterPro" id="IPR036670">
    <property type="entry name" value="SecA_X-link_sf"/>
</dbReference>
<dbReference type="NCBIfam" id="NF009538">
    <property type="entry name" value="PRK12904.1"/>
    <property type="match status" value="1"/>
</dbReference>
<dbReference type="NCBIfam" id="TIGR00963">
    <property type="entry name" value="secA"/>
    <property type="match status" value="1"/>
</dbReference>
<dbReference type="PANTHER" id="PTHR30612:SF0">
    <property type="entry name" value="CHLOROPLAST PROTEIN-TRANSPORTING ATPASE"/>
    <property type="match status" value="1"/>
</dbReference>
<dbReference type="PANTHER" id="PTHR30612">
    <property type="entry name" value="SECA INNER MEMBRANE COMPONENT OF SEC PROTEIN SECRETION SYSTEM"/>
    <property type="match status" value="1"/>
</dbReference>
<dbReference type="Pfam" id="PF21090">
    <property type="entry name" value="P-loop_SecA"/>
    <property type="match status" value="1"/>
</dbReference>
<dbReference type="Pfam" id="PF02810">
    <property type="entry name" value="SEC-C"/>
    <property type="match status" value="1"/>
</dbReference>
<dbReference type="Pfam" id="PF07517">
    <property type="entry name" value="SecA_DEAD"/>
    <property type="match status" value="1"/>
</dbReference>
<dbReference type="Pfam" id="PF01043">
    <property type="entry name" value="SecA_PP_bind"/>
    <property type="match status" value="1"/>
</dbReference>
<dbReference type="Pfam" id="PF07516">
    <property type="entry name" value="SecA_SW"/>
    <property type="match status" value="1"/>
</dbReference>
<dbReference type="PRINTS" id="PR00906">
    <property type="entry name" value="SECA"/>
</dbReference>
<dbReference type="SMART" id="SM00957">
    <property type="entry name" value="SecA_DEAD"/>
    <property type="match status" value="1"/>
</dbReference>
<dbReference type="SMART" id="SM00958">
    <property type="entry name" value="SecA_PP_bind"/>
    <property type="match status" value="1"/>
</dbReference>
<dbReference type="SUPFAM" id="SSF81886">
    <property type="entry name" value="Helical scaffold and wing domains of SecA"/>
    <property type="match status" value="1"/>
</dbReference>
<dbReference type="SUPFAM" id="SSF52540">
    <property type="entry name" value="P-loop containing nucleoside triphosphate hydrolases"/>
    <property type="match status" value="2"/>
</dbReference>
<dbReference type="SUPFAM" id="SSF81767">
    <property type="entry name" value="Pre-protein crosslinking domain of SecA"/>
    <property type="match status" value="1"/>
</dbReference>
<dbReference type="PROSITE" id="PS01312">
    <property type="entry name" value="SECA"/>
    <property type="match status" value="1"/>
</dbReference>
<dbReference type="PROSITE" id="PS51196">
    <property type="entry name" value="SECA_MOTOR_DEAD"/>
    <property type="match status" value="1"/>
</dbReference>
<evidence type="ECO:0000255" key="1">
    <source>
        <dbReference type="HAMAP-Rule" id="MF_01382"/>
    </source>
</evidence>
<protein>
    <recommendedName>
        <fullName evidence="1">Protein translocase subunit SecA</fullName>
        <ecNumber evidence="1">7.4.2.8</ecNumber>
    </recommendedName>
</protein>
<name>SECA_BURP1</name>
<keyword id="KW-0067">ATP-binding</keyword>
<keyword id="KW-0997">Cell inner membrane</keyword>
<keyword id="KW-1003">Cell membrane</keyword>
<keyword id="KW-0963">Cytoplasm</keyword>
<keyword id="KW-0472">Membrane</keyword>
<keyword id="KW-0479">Metal-binding</keyword>
<keyword id="KW-0547">Nucleotide-binding</keyword>
<keyword id="KW-0653">Protein transport</keyword>
<keyword id="KW-1278">Translocase</keyword>
<keyword id="KW-0811">Translocation</keyword>
<keyword id="KW-0813">Transport</keyword>
<keyword id="KW-0862">Zinc</keyword>
<sequence length="931" mass="104385">MTTGFLQKIFGSRNQRLVKQYQKTVAAINALETQIETLTDDQLRGKTGEFRQRIAAGESLDKLLPEAFAVCREASRRVLKMRHFDVQMIGGMVLHYGKIAEMRTGEGKTLVATLAAYLNALAGRGVHVVTVNDYLAQRDAEWMGRLYNFLGLSVGINLSGMEHDQKQAAYAADITYGTNNEFGFDYLRDNMVYETDSRVQRPLNFAVVDEVDSILIDEARTPLIISGQAEDHTELYVRMNALPPLLERQIGEEKADGTGVEKPGDYTLDEKGRQVFLTESGHEKAERMLAEWGLIGDGESLYAPQNITLMHHVYAALRAHTLFHRDQHYVVQNDEVIIVDEFTGRLMPGRRWSDGLHQAVEAKEHVKIQSENQTLASITFQNYFRMYAKLSGMTGTADTEAYEFNEIYGLETVVIPTNRPPKRIDKQDQIYKTAKERYDAVIRDIRECHERGQPVLVGTTSIENSELLSHLLKQAGLPHEVLNAKQHAREAAIVAEAGRPKRITIATNMAGRGTDIVLGGNVEKQAAFIEADESIPADEKARRIQQLHDEWETLHEQVKTAGGLHIIGTERHESRRIDNQLRGRAGRQGDPGSSRFYLSLEDPLLRIFAGDRVRAIMDRLKMPEGEAIEAGIVTRSIESAQRKVEARNFDIRKQLLEYDDVSNDQRKVIYQQRNELLEAHDIAETIGAMRHGVISEVVRQFVPAGSIEEQWDLPELEETLRNDWQLDLAIQEMVNESSSINADEILDAVTTAADEHYEAKVALVGRESFSAFERSIMLQTLDRLWREHLAALDHLRQGIHLRGYAQKNPKQEYKREAFELFAAMLDAVKQEVTRIVMNVQIQSPEQLEEAAEQIEEQGGQLGNVEFQHADFAAAAAAATAGGAVVADATAEMVGHAMSHSGPAGEVPRVGRNDPCPCGSGKKYKHCHGKLN</sequence>